<reference key="1">
    <citation type="journal article" date="2003" name="J. Bacteriol.">
        <title>Xenorhabdus nematophila requires an intact iscRSUA-hscBA-fdx operon to colonize Steinernema carpocapsae nematodes.</title>
        <authorList>
            <person name="Martens E.C."/>
            <person name="Gawronski-Salerno J."/>
            <person name="Vokal D.L."/>
            <person name="Pellitteri M.C."/>
            <person name="Menard M.L."/>
            <person name="Goodrich-Blair H."/>
        </authorList>
    </citation>
    <scope>NUCLEOTIDE SEQUENCE [GENOMIC DNA]</scope>
    <source>
        <strain>ATCC 19061 / DSM 3370 / CCUG 14189 / LMG 1036 / NCIMB 9965 / AN6</strain>
    </source>
</reference>
<reference key="2">
    <citation type="journal article" date="2011" name="PLoS ONE">
        <title>The entomopathogenic bacterial endosymbionts xenorhabdus and photorhabdus: convergent lifestyles from divergent genomes.</title>
        <authorList>
            <person name="Chaston J.M."/>
            <person name="Suen G."/>
            <person name="Tucker S.L."/>
            <person name="Andersen A.W."/>
            <person name="Bhasin A."/>
            <person name="Bode E."/>
            <person name="Bode H.B."/>
            <person name="Brachmann A.O."/>
            <person name="Cowles C.E."/>
            <person name="Cowles K.N."/>
            <person name="Darby C."/>
            <person name="de Leon L."/>
            <person name="Drace K."/>
            <person name="Du Z."/>
            <person name="Givaudan A."/>
            <person name="Herbert Tran E.E."/>
            <person name="Jewell K.A."/>
            <person name="Knack J.J."/>
            <person name="Krasomil-Osterfeld K.C."/>
            <person name="Kukor R."/>
            <person name="Lanois A."/>
            <person name="Latreille P."/>
            <person name="Leimgruber N.K."/>
            <person name="Lipke C.M."/>
            <person name="Liu R."/>
            <person name="Lu X."/>
            <person name="Martens E.C."/>
            <person name="Marri P.R."/>
            <person name="Medigue C."/>
            <person name="Menard M.L."/>
            <person name="Miller N.M."/>
            <person name="Morales-Soto N."/>
            <person name="Norton S."/>
            <person name="Ogier J.C."/>
            <person name="Orchard S.S."/>
            <person name="Park D."/>
            <person name="Park Y."/>
            <person name="Qurollo B.A."/>
            <person name="Sugar D.R."/>
            <person name="Richards G.R."/>
            <person name="Rouy Z."/>
            <person name="Slominski B."/>
            <person name="Slominski K."/>
            <person name="Snyder H."/>
            <person name="Tjaden B.C."/>
            <person name="van der Hoeven R."/>
            <person name="Welch R.D."/>
            <person name="Wheeler C."/>
            <person name="Xiang B."/>
            <person name="Barbazuk B."/>
            <person name="Gaudriault S."/>
            <person name="Goodner B."/>
            <person name="Slater S.C."/>
            <person name="Forst S."/>
            <person name="Goldman B.S."/>
            <person name="Goodrich-Blair H."/>
        </authorList>
    </citation>
    <scope>NUCLEOTIDE SEQUENCE [LARGE SCALE GENOMIC DNA]</scope>
    <source>
        <strain>ATCC 19061 / DSM 3370 / CCUG 14189 / LMG 1036 / NCIMB 9965 / AN6</strain>
    </source>
</reference>
<protein>
    <recommendedName>
        <fullName evidence="1">Chaperone protein HscA</fullName>
    </recommendedName>
    <alternativeName>
        <fullName evidence="1">Hsc66</fullName>
    </alternativeName>
</protein>
<proteinExistence type="inferred from homology"/>
<gene>
    <name evidence="1" type="primary">hscA</name>
    <name type="ordered locus">XNC1_3302</name>
</gene>
<dbReference type="EMBL" id="AY138456">
    <property type="protein sequence ID" value="AAN17749.1"/>
    <property type="molecule type" value="Genomic_DNA"/>
</dbReference>
<dbReference type="EMBL" id="FN667742">
    <property type="protein sequence ID" value="CBJ91354.1"/>
    <property type="molecule type" value="Genomic_DNA"/>
</dbReference>
<dbReference type="RefSeq" id="WP_013184955.1">
    <property type="nucleotide sequence ID" value="NC_014228.1"/>
</dbReference>
<dbReference type="SMR" id="Q8GLE4"/>
<dbReference type="STRING" id="406817.XNC1_3302"/>
<dbReference type="GeneID" id="24904991"/>
<dbReference type="KEGG" id="xne:XNC1_3302"/>
<dbReference type="eggNOG" id="COG0443">
    <property type="taxonomic scope" value="Bacteria"/>
</dbReference>
<dbReference type="HOGENOM" id="CLU_005965_2_1_6"/>
<dbReference type="Proteomes" id="UP000008075">
    <property type="component" value="Chromosome"/>
</dbReference>
<dbReference type="GO" id="GO:0005524">
    <property type="term" value="F:ATP binding"/>
    <property type="evidence" value="ECO:0007669"/>
    <property type="project" value="UniProtKB-KW"/>
</dbReference>
<dbReference type="GO" id="GO:0016887">
    <property type="term" value="F:ATP hydrolysis activity"/>
    <property type="evidence" value="ECO:0007669"/>
    <property type="project" value="UniProtKB-UniRule"/>
</dbReference>
<dbReference type="GO" id="GO:0140662">
    <property type="term" value="F:ATP-dependent protein folding chaperone"/>
    <property type="evidence" value="ECO:0007669"/>
    <property type="project" value="InterPro"/>
</dbReference>
<dbReference type="GO" id="GO:0051082">
    <property type="term" value="F:unfolded protein binding"/>
    <property type="evidence" value="ECO:0007669"/>
    <property type="project" value="InterPro"/>
</dbReference>
<dbReference type="GO" id="GO:0016226">
    <property type="term" value="P:iron-sulfur cluster assembly"/>
    <property type="evidence" value="ECO:0007669"/>
    <property type="project" value="InterPro"/>
</dbReference>
<dbReference type="CDD" id="cd10236">
    <property type="entry name" value="ASKHA_NBD_HSP70_HscA"/>
    <property type="match status" value="1"/>
</dbReference>
<dbReference type="FunFam" id="3.30.420.40:FF:000046">
    <property type="entry name" value="Chaperone protein HscA"/>
    <property type="match status" value="1"/>
</dbReference>
<dbReference type="FunFam" id="2.60.34.10:FF:000005">
    <property type="entry name" value="Chaperone protein HscA homolog"/>
    <property type="match status" value="1"/>
</dbReference>
<dbReference type="FunFam" id="3.30.420.40:FF:000020">
    <property type="entry name" value="Chaperone protein HscA homolog"/>
    <property type="match status" value="1"/>
</dbReference>
<dbReference type="Gene3D" id="1.20.1270.10">
    <property type="match status" value="1"/>
</dbReference>
<dbReference type="Gene3D" id="3.30.420.40">
    <property type="match status" value="2"/>
</dbReference>
<dbReference type="Gene3D" id="3.90.640.10">
    <property type="entry name" value="Actin, Chain A, domain 4"/>
    <property type="match status" value="1"/>
</dbReference>
<dbReference type="Gene3D" id="2.60.34.10">
    <property type="entry name" value="Substrate Binding Domain Of DNAk, Chain A, domain 1"/>
    <property type="match status" value="1"/>
</dbReference>
<dbReference type="HAMAP" id="MF_00679">
    <property type="entry name" value="HscA"/>
    <property type="match status" value="1"/>
</dbReference>
<dbReference type="InterPro" id="IPR043129">
    <property type="entry name" value="ATPase_NBD"/>
</dbReference>
<dbReference type="InterPro" id="IPR018181">
    <property type="entry name" value="Heat_shock_70_CS"/>
</dbReference>
<dbReference type="InterPro" id="IPR042039">
    <property type="entry name" value="HscA_NBD"/>
</dbReference>
<dbReference type="InterPro" id="IPR029048">
    <property type="entry name" value="HSP70_C_sf"/>
</dbReference>
<dbReference type="InterPro" id="IPR029047">
    <property type="entry name" value="HSP70_peptide-bd_sf"/>
</dbReference>
<dbReference type="InterPro" id="IPR013126">
    <property type="entry name" value="Hsp_70_fam"/>
</dbReference>
<dbReference type="InterPro" id="IPR010236">
    <property type="entry name" value="ISC_FeS_clus_asmbl_HscA"/>
</dbReference>
<dbReference type="NCBIfam" id="TIGR01991">
    <property type="entry name" value="HscA"/>
    <property type="match status" value="1"/>
</dbReference>
<dbReference type="NCBIfam" id="NF003520">
    <property type="entry name" value="PRK05183.1"/>
    <property type="match status" value="1"/>
</dbReference>
<dbReference type="PANTHER" id="PTHR19375">
    <property type="entry name" value="HEAT SHOCK PROTEIN 70KDA"/>
    <property type="match status" value="1"/>
</dbReference>
<dbReference type="Pfam" id="PF00012">
    <property type="entry name" value="HSP70"/>
    <property type="match status" value="1"/>
</dbReference>
<dbReference type="PRINTS" id="PR00301">
    <property type="entry name" value="HEATSHOCK70"/>
</dbReference>
<dbReference type="SUPFAM" id="SSF53067">
    <property type="entry name" value="Actin-like ATPase domain"/>
    <property type="match status" value="2"/>
</dbReference>
<dbReference type="SUPFAM" id="SSF100934">
    <property type="entry name" value="Heat shock protein 70kD (HSP70), C-terminal subdomain"/>
    <property type="match status" value="1"/>
</dbReference>
<dbReference type="SUPFAM" id="SSF100920">
    <property type="entry name" value="Heat shock protein 70kD (HSP70), peptide-binding domain"/>
    <property type="match status" value="1"/>
</dbReference>
<dbReference type="PROSITE" id="PS00297">
    <property type="entry name" value="HSP70_1"/>
    <property type="match status" value="1"/>
</dbReference>
<dbReference type="PROSITE" id="PS00329">
    <property type="entry name" value="HSP70_2"/>
    <property type="match status" value="1"/>
</dbReference>
<sequence length="615" mass="66420">MALLQISEPGLSAAPHQRRLAAGIDLGTTHSLVAVVRSGQTETLADSENRHLLPSVVQYRKEDIQVGWQARQQAASDPVNTVSSVKRMMGRSLADIQKRYPNLPYQFQASENGLPLINTAAGLVDPIQVSSDILKSLAQRAEKTLDGKLDGVVITVPAYFDDAQRQGTKDAARLAGLHVLRLLNEPTAAAIAYGLDSGQEGVIAVYDLGGGTFDVSILRLSRGVFEVLATGGDTALGGDDFDLLLANWIREQAGISDNDHRLQRQLLDIATQTKIVLSEADSAEICFADWQGRITRNEFNELITSLVKRTLLSCRRALKDAGVTADEVLQVVMVGGSTRVPLVRNMVGEFFDREPLTSIDPDRVVAIGAAIQADILVGNKPDSEMLLLDVIPLSLGLETMGGLVEKVIPRNTTIPVARAQEFTTFKDGQSAMSIHVVQGERELVNDCRSLARFTLRGIPPLAAGGAHIRVTFQVDADGLLSVSALEKSTGIESSIQVKPSYGLSDEEIARMLKDSMTNAQEDIQVRKLAEQKVEAARVLESLTGALEKDADLLSQEEQVAIDAAVQALIESVQGTSPDAIESAIKQLDKQTQEFAARRMDTSIRRALAGHSVDEI</sequence>
<organism>
    <name type="scientific">Xenorhabdus nematophila (strain ATCC 19061 / DSM 3370 / CCUG 14189 / LMG 1036 / NCIMB 9965 / AN6)</name>
    <dbReference type="NCBI Taxonomy" id="406817"/>
    <lineage>
        <taxon>Bacteria</taxon>
        <taxon>Pseudomonadati</taxon>
        <taxon>Pseudomonadota</taxon>
        <taxon>Gammaproteobacteria</taxon>
        <taxon>Enterobacterales</taxon>
        <taxon>Morganellaceae</taxon>
        <taxon>Xenorhabdus</taxon>
    </lineage>
</organism>
<accession>Q8GLE4</accession>
<accession>D3VLM8</accession>
<evidence type="ECO:0000255" key="1">
    <source>
        <dbReference type="HAMAP-Rule" id="MF_00679"/>
    </source>
</evidence>
<comment type="function">
    <text evidence="1">Chaperone involved in the maturation of iron-sulfur cluster-containing proteins. Has a low intrinsic ATPase activity which is markedly stimulated by HscB. Involved in the maturation of IscU.</text>
</comment>
<comment type="similarity">
    <text evidence="1">Belongs to the heat shock protein 70 family.</text>
</comment>
<keyword id="KW-0067">ATP-binding</keyword>
<keyword id="KW-0143">Chaperone</keyword>
<keyword id="KW-0547">Nucleotide-binding</keyword>
<keyword id="KW-1185">Reference proteome</keyword>
<feature type="chain" id="PRO_0000078656" description="Chaperone protein HscA">
    <location>
        <begin position="1"/>
        <end position="615"/>
    </location>
</feature>
<name>HSCA_XENNA</name>